<feature type="chain" id="PRO_0000358512" description="NADH-quinone oxidoreductase subunit B">
    <location>
        <begin position="1"/>
        <end position="184"/>
    </location>
</feature>
<feature type="binding site" evidence="2">
    <location>
        <position position="63"/>
    </location>
    <ligand>
        <name>[4Fe-4S] cluster</name>
        <dbReference type="ChEBI" id="CHEBI:49883"/>
    </ligand>
</feature>
<feature type="binding site" evidence="2">
    <location>
        <position position="64"/>
    </location>
    <ligand>
        <name>[4Fe-4S] cluster</name>
        <dbReference type="ChEBI" id="CHEBI:49883"/>
    </ligand>
</feature>
<feature type="binding site" evidence="2">
    <location>
        <position position="128"/>
    </location>
    <ligand>
        <name>[4Fe-4S] cluster</name>
        <dbReference type="ChEBI" id="CHEBI:49883"/>
    </ligand>
</feature>
<feature type="binding site" evidence="2">
    <location>
        <position position="158"/>
    </location>
    <ligand>
        <name>[4Fe-4S] cluster</name>
        <dbReference type="ChEBI" id="CHEBI:49883"/>
    </ligand>
</feature>
<reference key="1">
    <citation type="journal article" date="2000" name="Nature">
        <title>The genome sequence of the plant pathogen Xylella fastidiosa.</title>
        <authorList>
            <person name="Simpson A.J.G."/>
            <person name="Reinach F.C."/>
            <person name="Arruda P."/>
            <person name="Abreu F.A."/>
            <person name="Acencio M."/>
            <person name="Alvarenga R."/>
            <person name="Alves L.M.C."/>
            <person name="Araya J.E."/>
            <person name="Baia G.S."/>
            <person name="Baptista C.S."/>
            <person name="Barros M.H."/>
            <person name="Bonaccorsi E.D."/>
            <person name="Bordin S."/>
            <person name="Bove J.M."/>
            <person name="Briones M.R.S."/>
            <person name="Bueno M.R.P."/>
            <person name="Camargo A.A."/>
            <person name="Camargo L.E.A."/>
            <person name="Carraro D.M."/>
            <person name="Carrer H."/>
            <person name="Colauto N.B."/>
            <person name="Colombo C."/>
            <person name="Costa F.F."/>
            <person name="Costa M.C.R."/>
            <person name="Costa-Neto C.M."/>
            <person name="Coutinho L.L."/>
            <person name="Cristofani M."/>
            <person name="Dias-Neto E."/>
            <person name="Docena C."/>
            <person name="El-Dorry H."/>
            <person name="Facincani A.P."/>
            <person name="Ferreira A.J.S."/>
            <person name="Ferreira V.C.A."/>
            <person name="Ferro J.A."/>
            <person name="Fraga J.S."/>
            <person name="Franca S.C."/>
            <person name="Franco M.C."/>
            <person name="Frohme M."/>
            <person name="Furlan L.R."/>
            <person name="Garnier M."/>
            <person name="Goldman G.H."/>
            <person name="Goldman M.H.S."/>
            <person name="Gomes S.L."/>
            <person name="Gruber A."/>
            <person name="Ho P.L."/>
            <person name="Hoheisel J.D."/>
            <person name="Junqueira M.L."/>
            <person name="Kemper E.L."/>
            <person name="Kitajima J.P."/>
            <person name="Krieger J.E."/>
            <person name="Kuramae E.E."/>
            <person name="Laigret F."/>
            <person name="Lambais M.R."/>
            <person name="Leite L.C.C."/>
            <person name="Lemos E.G.M."/>
            <person name="Lemos M.V.F."/>
            <person name="Lopes S.A."/>
            <person name="Lopes C.R."/>
            <person name="Machado J.A."/>
            <person name="Machado M.A."/>
            <person name="Madeira A.M.B.N."/>
            <person name="Madeira H.M.F."/>
            <person name="Marino C.L."/>
            <person name="Marques M.V."/>
            <person name="Martins E.A.L."/>
            <person name="Martins E.M.F."/>
            <person name="Matsukuma A.Y."/>
            <person name="Menck C.F.M."/>
            <person name="Miracca E.C."/>
            <person name="Miyaki C.Y."/>
            <person name="Monteiro-Vitorello C.B."/>
            <person name="Moon D.H."/>
            <person name="Nagai M.A."/>
            <person name="Nascimento A.L.T.O."/>
            <person name="Netto L.E.S."/>
            <person name="Nhani A. Jr."/>
            <person name="Nobrega F.G."/>
            <person name="Nunes L.R."/>
            <person name="Oliveira M.A."/>
            <person name="de Oliveira M.C."/>
            <person name="de Oliveira R.C."/>
            <person name="Palmieri D.A."/>
            <person name="Paris A."/>
            <person name="Peixoto B.R."/>
            <person name="Pereira G.A.G."/>
            <person name="Pereira H.A. Jr."/>
            <person name="Pesquero J.B."/>
            <person name="Quaggio R.B."/>
            <person name="Roberto P.G."/>
            <person name="Rodrigues V."/>
            <person name="de Rosa A.J.M."/>
            <person name="de Rosa V.E. Jr."/>
            <person name="de Sa R.G."/>
            <person name="Santelli R.V."/>
            <person name="Sawasaki H.E."/>
            <person name="da Silva A.C.R."/>
            <person name="da Silva A.M."/>
            <person name="da Silva F.R."/>
            <person name="Silva W.A. Jr."/>
            <person name="da Silveira J.F."/>
            <person name="Silvestri M.L.Z."/>
            <person name="Siqueira W.J."/>
            <person name="de Souza A.A."/>
            <person name="de Souza A.P."/>
            <person name="Terenzi M.F."/>
            <person name="Truffi D."/>
            <person name="Tsai S.M."/>
            <person name="Tsuhako M.H."/>
            <person name="Vallada H."/>
            <person name="Van Sluys M.A."/>
            <person name="Verjovski-Almeida S."/>
            <person name="Vettore A.L."/>
            <person name="Zago M.A."/>
            <person name="Zatz M."/>
            <person name="Meidanis J."/>
            <person name="Setubal J.C."/>
        </authorList>
    </citation>
    <scope>NUCLEOTIDE SEQUENCE [LARGE SCALE GENOMIC DNA]</scope>
    <source>
        <strain>9a5c</strain>
    </source>
</reference>
<sequence length="184" mass="20196">MGVIQAIDRLMTNPIPDGQVDDILRPQGESPLLQKGYVTTSVDALLNWARTGSMWPMTFGLACCAVEMMHAGAARLDLDRYGIVFRPSPRQSDVMIVAGTLVNKMAPALRKVYDQMPDPKWVISMGSCANGGGYYHYSYSVVRGCDRIVPVDVYVPGCPPTAEALVYGILQLQKKIWRTQTNAG</sequence>
<keyword id="KW-0004">4Fe-4S</keyword>
<keyword id="KW-0997">Cell inner membrane</keyword>
<keyword id="KW-1003">Cell membrane</keyword>
<keyword id="KW-0408">Iron</keyword>
<keyword id="KW-0411">Iron-sulfur</keyword>
<keyword id="KW-0472">Membrane</keyword>
<keyword id="KW-0479">Metal-binding</keyword>
<keyword id="KW-0520">NAD</keyword>
<keyword id="KW-0874">Quinone</keyword>
<keyword id="KW-1278">Translocase</keyword>
<keyword id="KW-0813">Transport</keyword>
<keyword id="KW-0830">Ubiquinone</keyword>
<gene>
    <name evidence="2" type="primary">nuoB</name>
    <name type="ordered locus">XF_0306</name>
</gene>
<dbReference type="EC" id="7.1.1.-" evidence="2"/>
<dbReference type="EMBL" id="AE003849">
    <property type="protein sequence ID" value="AAF83117.1"/>
    <property type="status" value="ALT_INIT"/>
    <property type="molecule type" value="Genomic_DNA"/>
</dbReference>
<dbReference type="PIR" id="D82821">
    <property type="entry name" value="D82821"/>
</dbReference>
<dbReference type="RefSeq" id="WP_042462673.1">
    <property type="nucleotide sequence ID" value="NC_002488.3"/>
</dbReference>
<dbReference type="SMR" id="Q9PGJ4"/>
<dbReference type="STRING" id="160492.XF_0306"/>
<dbReference type="KEGG" id="xfa:XF_0306"/>
<dbReference type="PATRIC" id="fig|160492.11.peg.334"/>
<dbReference type="eggNOG" id="COG0377">
    <property type="taxonomic scope" value="Bacteria"/>
</dbReference>
<dbReference type="HOGENOM" id="CLU_055737_7_3_6"/>
<dbReference type="Proteomes" id="UP000000812">
    <property type="component" value="Chromosome"/>
</dbReference>
<dbReference type="GO" id="GO:0005886">
    <property type="term" value="C:plasma membrane"/>
    <property type="evidence" value="ECO:0007669"/>
    <property type="project" value="UniProtKB-SubCell"/>
</dbReference>
<dbReference type="GO" id="GO:0045271">
    <property type="term" value="C:respiratory chain complex I"/>
    <property type="evidence" value="ECO:0007669"/>
    <property type="project" value="TreeGrafter"/>
</dbReference>
<dbReference type="GO" id="GO:0051539">
    <property type="term" value="F:4 iron, 4 sulfur cluster binding"/>
    <property type="evidence" value="ECO:0007669"/>
    <property type="project" value="UniProtKB-KW"/>
</dbReference>
<dbReference type="GO" id="GO:0005506">
    <property type="term" value="F:iron ion binding"/>
    <property type="evidence" value="ECO:0007669"/>
    <property type="project" value="UniProtKB-UniRule"/>
</dbReference>
<dbReference type="GO" id="GO:0008137">
    <property type="term" value="F:NADH dehydrogenase (ubiquinone) activity"/>
    <property type="evidence" value="ECO:0007669"/>
    <property type="project" value="InterPro"/>
</dbReference>
<dbReference type="GO" id="GO:0050136">
    <property type="term" value="F:NADH:ubiquinone reductase (non-electrogenic) activity"/>
    <property type="evidence" value="ECO:0007669"/>
    <property type="project" value="UniProtKB-UniRule"/>
</dbReference>
<dbReference type="GO" id="GO:0048038">
    <property type="term" value="F:quinone binding"/>
    <property type="evidence" value="ECO:0007669"/>
    <property type="project" value="UniProtKB-KW"/>
</dbReference>
<dbReference type="GO" id="GO:0009060">
    <property type="term" value="P:aerobic respiration"/>
    <property type="evidence" value="ECO:0007669"/>
    <property type="project" value="TreeGrafter"/>
</dbReference>
<dbReference type="GO" id="GO:0015990">
    <property type="term" value="P:electron transport coupled proton transport"/>
    <property type="evidence" value="ECO:0007669"/>
    <property type="project" value="TreeGrafter"/>
</dbReference>
<dbReference type="FunFam" id="3.40.50.12280:FF:000001">
    <property type="entry name" value="NADH-quinone oxidoreductase subunit B 2"/>
    <property type="match status" value="1"/>
</dbReference>
<dbReference type="Gene3D" id="3.40.50.12280">
    <property type="match status" value="1"/>
</dbReference>
<dbReference type="HAMAP" id="MF_01356">
    <property type="entry name" value="NDH1_NuoB"/>
    <property type="match status" value="1"/>
</dbReference>
<dbReference type="InterPro" id="IPR006137">
    <property type="entry name" value="NADH_UbQ_OxRdtase-like_20kDa"/>
</dbReference>
<dbReference type="InterPro" id="IPR006138">
    <property type="entry name" value="NADH_UQ_OxRdtase_20Kd_su"/>
</dbReference>
<dbReference type="NCBIfam" id="TIGR01957">
    <property type="entry name" value="nuoB_fam"/>
    <property type="match status" value="1"/>
</dbReference>
<dbReference type="NCBIfam" id="NF005012">
    <property type="entry name" value="PRK06411.1"/>
    <property type="match status" value="1"/>
</dbReference>
<dbReference type="PANTHER" id="PTHR11995">
    <property type="entry name" value="NADH DEHYDROGENASE"/>
    <property type="match status" value="1"/>
</dbReference>
<dbReference type="PANTHER" id="PTHR11995:SF14">
    <property type="entry name" value="NADH DEHYDROGENASE [UBIQUINONE] IRON-SULFUR PROTEIN 7, MITOCHONDRIAL"/>
    <property type="match status" value="1"/>
</dbReference>
<dbReference type="Pfam" id="PF01058">
    <property type="entry name" value="Oxidored_q6"/>
    <property type="match status" value="1"/>
</dbReference>
<dbReference type="SUPFAM" id="SSF56770">
    <property type="entry name" value="HydA/Nqo6-like"/>
    <property type="match status" value="1"/>
</dbReference>
<dbReference type="PROSITE" id="PS01150">
    <property type="entry name" value="COMPLEX1_20K"/>
    <property type="match status" value="1"/>
</dbReference>
<protein>
    <recommendedName>
        <fullName evidence="2">NADH-quinone oxidoreductase subunit B</fullName>
        <ecNumber evidence="2">7.1.1.-</ecNumber>
    </recommendedName>
    <alternativeName>
        <fullName evidence="2">NADH dehydrogenase I subunit B</fullName>
    </alternativeName>
    <alternativeName>
        <fullName evidence="2">NDH-1 subunit B</fullName>
    </alternativeName>
</protein>
<comment type="function">
    <text evidence="1">NDH-1 shuttles electrons from NADH, via FMN and iron-sulfur (Fe-S) centers, to quinones in the respiratory chain. Couples the redox reaction to proton translocation (for every two electrons transferred, four hydrogen ions are translocated across the cytoplasmic membrane), and thus conserves the redox energy in a proton gradient (By similarity).</text>
</comment>
<comment type="catalytic activity">
    <reaction evidence="2">
        <text>a quinone + NADH + 5 H(+)(in) = a quinol + NAD(+) + 4 H(+)(out)</text>
        <dbReference type="Rhea" id="RHEA:57888"/>
        <dbReference type="ChEBI" id="CHEBI:15378"/>
        <dbReference type="ChEBI" id="CHEBI:24646"/>
        <dbReference type="ChEBI" id="CHEBI:57540"/>
        <dbReference type="ChEBI" id="CHEBI:57945"/>
        <dbReference type="ChEBI" id="CHEBI:132124"/>
    </reaction>
</comment>
<comment type="cofactor">
    <cofactor evidence="2">
        <name>[4Fe-4S] cluster</name>
        <dbReference type="ChEBI" id="CHEBI:49883"/>
    </cofactor>
    <text evidence="2">Binds 1 [4Fe-4S] cluster.</text>
</comment>
<comment type="subunit">
    <text evidence="2">NDH-1 is composed of 14 different subunits. Subunits NuoB, C, D, E, F, and G constitute the peripheral sector of the complex.</text>
</comment>
<comment type="subcellular location">
    <subcellularLocation>
        <location evidence="2">Cell inner membrane</location>
        <topology evidence="2">Peripheral membrane protein</topology>
        <orientation evidence="2">Cytoplasmic side</orientation>
    </subcellularLocation>
</comment>
<comment type="similarity">
    <text evidence="2">Belongs to the complex I 20 kDa subunit family.</text>
</comment>
<comment type="sequence caution" evidence="3">
    <conflict type="erroneous initiation">
        <sequence resource="EMBL-CDS" id="AAF83117"/>
    </conflict>
</comment>
<evidence type="ECO:0000250" key="1"/>
<evidence type="ECO:0000255" key="2">
    <source>
        <dbReference type="HAMAP-Rule" id="MF_01356"/>
    </source>
</evidence>
<evidence type="ECO:0000305" key="3"/>
<proteinExistence type="inferred from homology"/>
<name>NUOB_XYLFA</name>
<accession>Q9PGJ4</accession>
<organism>
    <name type="scientific">Xylella fastidiosa (strain 9a5c)</name>
    <dbReference type="NCBI Taxonomy" id="160492"/>
    <lineage>
        <taxon>Bacteria</taxon>
        <taxon>Pseudomonadati</taxon>
        <taxon>Pseudomonadota</taxon>
        <taxon>Gammaproteobacteria</taxon>
        <taxon>Lysobacterales</taxon>
        <taxon>Lysobacteraceae</taxon>
        <taxon>Xylella</taxon>
    </lineage>
</organism>